<accession>P81469</accession>
<organism>
    <name type="scientific">Styela clava</name>
    <name type="common">Sea squirt</name>
    <dbReference type="NCBI Taxonomy" id="7725"/>
    <lineage>
        <taxon>Eukaryota</taxon>
        <taxon>Metazoa</taxon>
        <taxon>Chordata</taxon>
        <taxon>Tunicata</taxon>
        <taxon>Ascidiacea</taxon>
        <taxon>Stolidobranchia</taxon>
        <taxon>Styelidae</taxon>
        <taxon>Styela</taxon>
    </lineage>
</organism>
<comment type="function">
    <text>Bactericidal against several Gram-positive and Gram-negative bacteria.</text>
</comment>
<comment type="subcellular location">
    <subcellularLocation>
        <location>Secreted</location>
    </subcellularLocation>
</comment>
<comment type="tissue specificity">
    <text>Hemocytes and pharyngeal tissues.</text>
</comment>
<sequence length="20" mass="2148">GXFGKAFXSVSNFAKKHKTA</sequence>
<dbReference type="GO" id="GO:0005576">
    <property type="term" value="C:extracellular region"/>
    <property type="evidence" value="ECO:0007669"/>
    <property type="project" value="UniProtKB-SubCell"/>
</dbReference>
<dbReference type="GO" id="GO:0042742">
    <property type="term" value="P:defense response to bacterium"/>
    <property type="evidence" value="ECO:0007669"/>
    <property type="project" value="UniProtKB-KW"/>
</dbReference>
<keyword id="KW-0044">Antibiotic</keyword>
<keyword id="KW-0929">Antimicrobial</keyword>
<keyword id="KW-0903">Direct protein sequencing</keyword>
<keyword id="KW-0964">Secreted</keyword>
<protein>
    <recommendedName>
        <fullName>Styelin-A</fullName>
    </recommendedName>
</protein>
<feature type="peptide" id="PRO_0000045105" description="Styelin-A">
    <location>
        <begin position="1"/>
        <end position="20" status="greater than"/>
    </location>
</feature>
<feature type="non-terminal residue">
    <location>
        <position position="20"/>
    </location>
</feature>
<reference key="1">
    <citation type="journal article" date="1997" name="Comp. Biochem. Physiol.">
        <title>Styelins, broad-spectrum antimicrobial peptides from the solitary tunicate, Styela clava.</title>
        <authorList>
            <person name="Lee I.H."/>
            <person name="Cho Y."/>
            <person name="Lehrer R.I."/>
        </authorList>
    </citation>
    <scope>PROTEIN SEQUENCE</scope>
    <source>
        <tissue>Hemocyte</tissue>
    </source>
</reference>
<proteinExistence type="evidence at protein level"/>
<name>STYA_STYCL</name>